<dbReference type="EC" id="3.1.1.88" evidence="6"/>
<dbReference type="EC" id="3.1.1.-"/>
<dbReference type="EMBL" id="AK078953">
    <property type="protein sequence ID" value="BAC37476.1"/>
    <property type="molecule type" value="mRNA"/>
</dbReference>
<dbReference type="EMBL" id="AK165784">
    <property type="protein sequence ID" value="BAE38379.1"/>
    <property type="molecule type" value="mRNA"/>
</dbReference>
<dbReference type="EMBL" id="AC156564">
    <property type="status" value="NOT_ANNOTATED_CDS"/>
    <property type="molecule type" value="Genomic_DNA"/>
</dbReference>
<dbReference type="EMBL" id="CH466525">
    <property type="protein sequence ID" value="EDL11232.1"/>
    <property type="molecule type" value="Genomic_DNA"/>
</dbReference>
<dbReference type="EMBL" id="BC024082">
    <property type="protein sequence ID" value="AAH24082.1"/>
    <property type="molecule type" value="mRNA"/>
</dbReference>
<dbReference type="EMBL" id="BC024491">
    <property type="protein sequence ID" value="AAH24491.1"/>
    <property type="molecule type" value="mRNA"/>
</dbReference>
<dbReference type="EMBL" id="BC024517">
    <property type="protein sequence ID" value="AAH24517.1"/>
    <property type="molecule type" value="mRNA"/>
</dbReference>
<dbReference type="EMBL" id="BC025537">
    <property type="protein sequence ID" value="AAH25537.1"/>
    <property type="molecule type" value="mRNA"/>
</dbReference>
<dbReference type="EMBL" id="BC025812">
    <property type="protein sequence ID" value="AAH25812.1"/>
    <property type="molecule type" value="mRNA"/>
</dbReference>
<dbReference type="EMBL" id="BC026643">
    <property type="protein sequence ID" value="AAH26643.1"/>
    <property type="molecule type" value="mRNA"/>
</dbReference>
<dbReference type="EMBL" id="BC031295">
    <property type="protein sequence ID" value="AAH31295.1"/>
    <property type="molecule type" value="mRNA"/>
</dbReference>
<dbReference type="CCDS" id="CCDS22585.1">
    <molecule id="Q8QZR3-1"/>
</dbReference>
<dbReference type="CCDS" id="CCDS52650.1">
    <molecule id="Q8QZR3-2"/>
</dbReference>
<dbReference type="RefSeq" id="NP_001177259.1">
    <molecule id="Q8QZR3-2"/>
    <property type="nucleotide sequence ID" value="NM_001190330.1"/>
</dbReference>
<dbReference type="RefSeq" id="NP_598721.1">
    <molecule id="Q8QZR3-1"/>
    <property type="nucleotide sequence ID" value="NM_133960.5"/>
</dbReference>
<dbReference type="SMR" id="Q8QZR3"/>
<dbReference type="FunCoup" id="Q8QZR3">
    <property type="interactions" value="589"/>
</dbReference>
<dbReference type="IntAct" id="Q8QZR3">
    <property type="interactions" value="1"/>
</dbReference>
<dbReference type="STRING" id="10090.ENSMUSP00000034346"/>
<dbReference type="ESTHER" id="mouse-Ces2a">
    <property type="family name" value="Carb_B_Chordata"/>
</dbReference>
<dbReference type="MEROPS" id="S09.997"/>
<dbReference type="GlyCosmos" id="Q8QZR3">
    <property type="glycosylation" value="2 sites, No reported glycans"/>
</dbReference>
<dbReference type="GlyGen" id="Q8QZR3">
    <property type="glycosylation" value="2 sites, 1 N-linked glycan (1 site)"/>
</dbReference>
<dbReference type="iPTMnet" id="Q8QZR3"/>
<dbReference type="PhosphoSitePlus" id="Q8QZR3"/>
<dbReference type="SwissPalm" id="Q8QZR3"/>
<dbReference type="jPOST" id="Q8QZR3"/>
<dbReference type="PaxDb" id="10090-ENSMUSP00000034346"/>
<dbReference type="PeptideAtlas" id="Q8QZR3"/>
<dbReference type="ProteomicsDB" id="275480">
    <molecule id="Q8QZR3-1"/>
</dbReference>
<dbReference type="ProteomicsDB" id="275481">
    <molecule id="Q8QZR3-2"/>
</dbReference>
<dbReference type="DNASU" id="102022"/>
<dbReference type="Ensembl" id="ENSMUST00000034346.15">
    <molecule id="Q8QZR3-1"/>
    <property type="protein sequence ID" value="ENSMUSP00000034346.8"/>
    <property type="gene ID" value="ENSMUSG00000055730.17"/>
</dbReference>
<dbReference type="Ensembl" id="ENSMUST00000164182.3">
    <molecule id="Q8QZR3-2"/>
    <property type="protein sequence ID" value="ENSMUSP00000127346.3"/>
    <property type="gene ID" value="ENSMUSG00000055730.17"/>
</dbReference>
<dbReference type="GeneID" id="102022"/>
<dbReference type="KEGG" id="mmu:102022"/>
<dbReference type="UCSC" id="uc009nbc.2">
    <molecule id="Q8QZR3-1"/>
    <property type="organism name" value="mouse"/>
</dbReference>
<dbReference type="UCSC" id="uc012giz.1">
    <molecule id="Q8QZR3-2"/>
    <property type="organism name" value="mouse"/>
</dbReference>
<dbReference type="AGR" id="MGI:2142491"/>
<dbReference type="CTD" id="102022"/>
<dbReference type="MGI" id="MGI:2142491">
    <property type="gene designation" value="Ces2a"/>
</dbReference>
<dbReference type="VEuPathDB" id="HostDB:ENSMUSG00000055730"/>
<dbReference type="eggNOG" id="KOG1516">
    <property type="taxonomic scope" value="Eukaryota"/>
</dbReference>
<dbReference type="GeneTree" id="ENSGT00940000153793"/>
<dbReference type="HOGENOM" id="CLU_006586_13_0_1"/>
<dbReference type="InParanoid" id="Q8QZR3"/>
<dbReference type="OMA" id="MMGMTSE"/>
<dbReference type="OrthoDB" id="3200163at2759"/>
<dbReference type="PhylomeDB" id="Q8QZR3"/>
<dbReference type="TreeFam" id="TF315470"/>
<dbReference type="BioGRID-ORCS" id="102022">
    <property type="hits" value="3 hits in 76 CRISPR screens"/>
</dbReference>
<dbReference type="PRO" id="PR:Q8QZR3"/>
<dbReference type="Proteomes" id="UP000000589">
    <property type="component" value="Chromosome 8"/>
</dbReference>
<dbReference type="RNAct" id="Q8QZR3">
    <property type="molecule type" value="protein"/>
</dbReference>
<dbReference type="Bgee" id="ENSMUSG00000055730">
    <property type="expression patterns" value="Expressed in small intestine Peyer's patch and 35 other cell types or tissues"/>
</dbReference>
<dbReference type="ExpressionAtlas" id="Q8QZR3">
    <property type="expression patterns" value="baseline and differential"/>
</dbReference>
<dbReference type="GO" id="GO:0005783">
    <property type="term" value="C:endoplasmic reticulum"/>
    <property type="evidence" value="ECO:0007669"/>
    <property type="project" value="UniProtKB-KW"/>
</dbReference>
<dbReference type="GO" id="GO:0047376">
    <property type="term" value="F:all-trans-retinyl-palmitate hydrolase, all-trans-retinol forming activity"/>
    <property type="evidence" value="ECO:0007669"/>
    <property type="project" value="RHEA"/>
</dbReference>
<dbReference type="GO" id="GO:0106435">
    <property type="term" value="F:carboxylesterase activity"/>
    <property type="evidence" value="ECO:0000314"/>
    <property type="project" value="MGI"/>
</dbReference>
<dbReference type="GO" id="GO:0102209">
    <property type="term" value="F:trans-permethrin hydrolase activity"/>
    <property type="evidence" value="ECO:0007669"/>
    <property type="project" value="UniProtKB-EC"/>
</dbReference>
<dbReference type="GO" id="GO:0006486">
    <property type="term" value="P:protein glycosylation"/>
    <property type="evidence" value="ECO:0000314"/>
    <property type="project" value="MGI"/>
</dbReference>
<dbReference type="CDD" id="cd00312">
    <property type="entry name" value="Esterase_lipase"/>
    <property type="match status" value="1"/>
</dbReference>
<dbReference type="FunFam" id="3.40.50.1820:FF:000011">
    <property type="entry name" value="Carboxylic ester hydrolase"/>
    <property type="match status" value="1"/>
</dbReference>
<dbReference type="Gene3D" id="3.40.50.1820">
    <property type="entry name" value="alpha/beta hydrolase"/>
    <property type="match status" value="1"/>
</dbReference>
<dbReference type="InterPro" id="IPR029058">
    <property type="entry name" value="AB_hydrolase_fold"/>
</dbReference>
<dbReference type="InterPro" id="IPR002018">
    <property type="entry name" value="CarbesteraseB"/>
</dbReference>
<dbReference type="InterPro" id="IPR019826">
    <property type="entry name" value="Carboxylesterase_B_AS"/>
</dbReference>
<dbReference type="InterPro" id="IPR019819">
    <property type="entry name" value="Carboxylesterase_B_CS"/>
</dbReference>
<dbReference type="InterPro" id="IPR050309">
    <property type="entry name" value="Type-B_Carboxylest/Lipase"/>
</dbReference>
<dbReference type="PANTHER" id="PTHR11559">
    <property type="entry name" value="CARBOXYLESTERASE"/>
    <property type="match status" value="1"/>
</dbReference>
<dbReference type="Pfam" id="PF00135">
    <property type="entry name" value="COesterase"/>
    <property type="match status" value="1"/>
</dbReference>
<dbReference type="SUPFAM" id="SSF53474">
    <property type="entry name" value="alpha/beta-Hydrolases"/>
    <property type="match status" value="1"/>
</dbReference>
<dbReference type="PROSITE" id="PS00122">
    <property type="entry name" value="CARBOXYLESTERASE_B_1"/>
    <property type="match status" value="1"/>
</dbReference>
<dbReference type="PROSITE" id="PS00941">
    <property type="entry name" value="CARBOXYLESTERASE_B_2"/>
    <property type="match status" value="1"/>
</dbReference>
<organism>
    <name type="scientific">Mus musculus</name>
    <name type="common">Mouse</name>
    <dbReference type="NCBI Taxonomy" id="10090"/>
    <lineage>
        <taxon>Eukaryota</taxon>
        <taxon>Metazoa</taxon>
        <taxon>Chordata</taxon>
        <taxon>Craniata</taxon>
        <taxon>Vertebrata</taxon>
        <taxon>Euteleostomi</taxon>
        <taxon>Mammalia</taxon>
        <taxon>Eutheria</taxon>
        <taxon>Euarchontoglires</taxon>
        <taxon>Glires</taxon>
        <taxon>Rodentia</taxon>
        <taxon>Myomorpha</taxon>
        <taxon>Muroidea</taxon>
        <taxon>Muridae</taxon>
        <taxon>Murinae</taxon>
        <taxon>Mus</taxon>
        <taxon>Mus</taxon>
    </lineage>
</organism>
<proteinExistence type="evidence at protein level"/>
<evidence type="ECO:0000250" key="1">
    <source>
        <dbReference type="UniProtKB" id="P23141"/>
    </source>
</evidence>
<evidence type="ECO:0000250" key="2">
    <source>
        <dbReference type="UniProtKB" id="Q8K3R0"/>
    </source>
</evidence>
<evidence type="ECO:0000250" key="3">
    <source>
        <dbReference type="UniProtKB" id="Q99K10"/>
    </source>
</evidence>
<evidence type="ECO:0000255" key="4"/>
<evidence type="ECO:0000255" key="5">
    <source>
        <dbReference type="PROSITE-ProRule" id="PRU10039"/>
    </source>
</evidence>
<evidence type="ECO:0000269" key="6">
    <source>
    </source>
</evidence>
<evidence type="ECO:0000303" key="7">
    <source>
    </source>
</evidence>
<evidence type="ECO:0000305" key="8"/>
<evidence type="ECO:0000312" key="9">
    <source>
        <dbReference type="MGI" id="MGI:2142491"/>
    </source>
</evidence>
<evidence type="ECO:0007744" key="10">
    <source>
    </source>
</evidence>
<reference key="1">
    <citation type="journal article" date="2005" name="Science">
        <title>The transcriptional landscape of the mammalian genome.</title>
        <authorList>
            <person name="Carninci P."/>
            <person name="Kasukawa T."/>
            <person name="Katayama S."/>
            <person name="Gough J."/>
            <person name="Frith M.C."/>
            <person name="Maeda N."/>
            <person name="Oyama R."/>
            <person name="Ravasi T."/>
            <person name="Lenhard B."/>
            <person name="Wells C."/>
            <person name="Kodzius R."/>
            <person name="Shimokawa K."/>
            <person name="Bajic V.B."/>
            <person name="Brenner S.E."/>
            <person name="Batalov S."/>
            <person name="Forrest A.R."/>
            <person name="Zavolan M."/>
            <person name="Davis M.J."/>
            <person name="Wilming L.G."/>
            <person name="Aidinis V."/>
            <person name="Allen J.E."/>
            <person name="Ambesi-Impiombato A."/>
            <person name="Apweiler R."/>
            <person name="Aturaliya R.N."/>
            <person name="Bailey T.L."/>
            <person name="Bansal M."/>
            <person name="Baxter L."/>
            <person name="Beisel K.W."/>
            <person name="Bersano T."/>
            <person name="Bono H."/>
            <person name="Chalk A.M."/>
            <person name="Chiu K.P."/>
            <person name="Choudhary V."/>
            <person name="Christoffels A."/>
            <person name="Clutterbuck D.R."/>
            <person name="Crowe M.L."/>
            <person name="Dalla E."/>
            <person name="Dalrymple B.P."/>
            <person name="de Bono B."/>
            <person name="Della Gatta G."/>
            <person name="di Bernardo D."/>
            <person name="Down T."/>
            <person name="Engstrom P."/>
            <person name="Fagiolini M."/>
            <person name="Faulkner G."/>
            <person name="Fletcher C.F."/>
            <person name="Fukushima T."/>
            <person name="Furuno M."/>
            <person name="Futaki S."/>
            <person name="Gariboldi M."/>
            <person name="Georgii-Hemming P."/>
            <person name="Gingeras T.R."/>
            <person name="Gojobori T."/>
            <person name="Green R.E."/>
            <person name="Gustincich S."/>
            <person name="Harbers M."/>
            <person name="Hayashi Y."/>
            <person name="Hensch T.K."/>
            <person name="Hirokawa N."/>
            <person name="Hill D."/>
            <person name="Huminiecki L."/>
            <person name="Iacono M."/>
            <person name="Ikeo K."/>
            <person name="Iwama A."/>
            <person name="Ishikawa T."/>
            <person name="Jakt M."/>
            <person name="Kanapin A."/>
            <person name="Katoh M."/>
            <person name="Kawasawa Y."/>
            <person name="Kelso J."/>
            <person name="Kitamura H."/>
            <person name="Kitano H."/>
            <person name="Kollias G."/>
            <person name="Krishnan S.P."/>
            <person name="Kruger A."/>
            <person name="Kummerfeld S.K."/>
            <person name="Kurochkin I.V."/>
            <person name="Lareau L.F."/>
            <person name="Lazarevic D."/>
            <person name="Lipovich L."/>
            <person name="Liu J."/>
            <person name="Liuni S."/>
            <person name="McWilliam S."/>
            <person name="Madan Babu M."/>
            <person name="Madera M."/>
            <person name="Marchionni L."/>
            <person name="Matsuda H."/>
            <person name="Matsuzawa S."/>
            <person name="Miki H."/>
            <person name="Mignone F."/>
            <person name="Miyake S."/>
            <person name="Morris K."/>
            <person name="Mottagui-Tabar S."/>
            <person name="Mulder N."/>
            <person name="Nakano N."/>
            <person name="Nakauchi H."/>
            <person name="Ng P."/>
            <person name="Nilsson R."/>
            <person name="Nishiguchi S."/>
            <person name="Nishikawa S."/>
            <person name="Nori F."/>
            <person name="Ohara O."/>
            <person name="Okazaki Y."/>
            <person name="Orlando V."/>
            <person name="Pang K.C."/>
            <person name="Pavan W.J."/>
            <person name="Pavesi G."/>
            <person name="Pesole G."/>
            <person name="Petrovsky N."/>
            <person name="Piazza S."/>
            <person name="Reed J."/>
            <person name="Reid J.F."/>
            <person name="Ring B.Z."/>
            <person name="Ringwald M."/>
            <person name="Rost B."/>
            <person name="Ruan Y."/>
            <person name="Salzberg S.L."/>
            <person name="Sandelin A."/>
            <person name="Schneider C."/>
            <person name="Schoenbach C."/>
            <person name="Sekiguchi K."/>
            <person name="Semple C.A."/>
            <person name="Seno S."/>
            <person name="Sessa L."/>
            <person name="Sheng Y."/>
            <person name="Shibata Y."/>
            <person name="Shimada H."/>
            <person name="Shimada K."/>
            <person name="Silva D."/>
            <person name="Sinclair B."/>
            <person name="Sperling S."/>
            <person name="Stupka E."/>
            <person name="Sugiura K."/>
            <person name="Sultana R."/>
            <person name="Takenaka Y."/>
            <person name="Taki K."/>
            <person name="Tammoja K."/>
            <person name="Tan S.L."/>
            <person name="Tang S."/>
            <person name="Taylor M.S."/>
            <person name="Tegner J."/>
            <person name="Teichmann S.A."/>
            <person name="Ueda H.R."/>
            <person name="van Nimwegen E."/>
            <person name="Verardo R."/>
            <person name="Wei C.L."/>
            <person name="Yagi K."/>
            <person name="Yamanishi H."/>
            <person name="Zabarovsky E."/>
            <person name="Zhu S."/>
            <person name="Zimmer A."/>
            <person name="Hide W."/>
            <person name="Bult C."/>
            <person name="Grimmond S.M."/>
            <person name="Teasdale R.D."/>
            <person name="Liu E.T."/>
            <person name="Brusic V."/>
            <person name="Quackenbush J."/>
            <person name="Wahlestedt C."/>
            <person name="Mattick J.S."/>
            <person name="Hume D.A."/>
            <person name="Kai C."/>
            <person name="Sasaki D."/>
            <person name="Tomaru Y."/>
            <person name="Fukuda S."/>
            <person name="Kanamori-Katayama M."/>
            <person name="Suzuki M."/>
            <person name="Aoki J."/>
            <person name="Arakawa T."/>
            <person name="Iida J."/>
            <person name="Imamura K."/>
            <person name="Itoh M."/>
            <person name="Kato T."/>
            <person name="Kawaji H."/>
            <person name="Kawagashira N."/>
            <person name="Kawashima T."/>
            <person name="Kojima M."/>
            <person name="Kondo S."/>
            <person name="Konno H."/>
            <person name="Nakano K."/>
            <person name="Ninomiya N."/>
            <person name="Nishio T."/>
            <person name="Okada M."/>
            <person name="Plessy C."/>
            <person name="Shibata K."/>
            <person name="Shiraki T."/>
            <person name="Suzuki S."/>
            <person name="Tagami M."/>
            <person name="Waki K."/>
            <person name="Watahiki A."/>
            <person name="Okamura-Oho Y."/>
            <person name="Suzuki H."/>
            <person name="Kawai J."/>
            <person name="Hayashizaki Y."/>
        </authorList>
    </citation>
    <scope>NUCLEOTIDE SEQUENCE [LARGE SCALE MRNA] (ISOFORMS 1 AND 2)</scope>
    <source>
        <strain>C57BL/6J</strain>
        <tissue>Cecum</tissue>
        <tissue>Intestinal mucosa</tissue>
    </source>
</reference>
<reference key="2">
    <citation type="journal article" date="2009" name="PLoS Biol.">
        <title>Lineage-specific biology revealed by a finished genome assembly of the mouse.</title>
        <authorList>
            <person name="Church D.M."/>
            <person name="Goodstadt L."/>
            <person name="Hillier L.W."/>
            <person name="Zody M.C."/>
            <person name="Goldstein S."/>
            <person name="She X."/>
            <person name="Bult C.J."/>
            <person name="Agarwala R."/>
            <person name="Cherry J.L."/>
            <person name="DiCuccio M."/>
            <person name="Hlavina W."/>
            <person name="Kapustin Y."/>
            <person name="Meric P."/>
            <person name="Maglott D."/>
            <person name="Birtle Z."/>
            <person name="Marques A.C."/>
            <person name="Graves T."/>
            <person name="Zhou S."/>
            <person name="Teague B."/>
            <person name="Potamousis K."/>
            <person name="Churas C."/>
            <person name="Place M."/>
            <person name="Herschleb J."/>
            <person name="Runnheim R."/>
            <person name="Forrest D."/>
            <person name="Amos-Landgraf J."/>
            <person name="Schwartz D.C."/>
            <person name="Cheng Z."/>
            <person name="Lindblad-Toh K."/>
            <person name="Eichler E.E."/>
            <person name="Ponting C.P."/>
        </authorList>
    </citation>
    <scope>NUCLEOTIDE SEQUENCE [LARGE SCALE GENOMIC DNA]</scope>
    <source>
        <strain>C57BL/6J</strain>
    </source>
</reference>
<reference key="3">
    <citation type="submission" date="2005-07" db="EMBL/GenBank/DDBJ databases">
        <authorList>
            <person name="Mural R.J."/>
            <person name="Adams M.D."/>
            <person name="Myers E.W."/>
            <person name="Smith H.O."/>
            <person name="Venter J.C."/>
        </authorList>
    </citation>
    <scope>NUCLEOTIDE SEQUENCE [LARGE SCALE GENOMIC DNA]</scope>
</reference>
<reference key="4">
    <citation type="journal article" date="2004" name="Genome Res.">
        <title>The status, quality, and expansion of the NIH full-length cDNA project: the Mammalian Gene Collection (MGC).</title>
        <authorList>
            <consortium name="The MGC Project Team"/>
        </authorList>
    </citation>
    <scope>NUCLEOTIDE SEQUENCE [LARGE SCALE MRNA] (ISOFORM 1)</scope>
    <source>
        <strain>FVB/N</strain>
        <tissue>Colon</tissue>
        <tissue>Liver</tissue>
    </source>
</reference>
<reference key="5">
    <citation type="journal article" date="2004" name="J. Biol. Chem.">
        <title>Identification, expression, and purification of a pyrethroid-hydrolyzing carboxylesterase from mouse liver microsomes.</title>
        <authorList>
            <person name="Stok J.E."/>
            <person name="Huang H."/>
            <person name="Jones P.D."/>
            <person name="Wheelock C.E."/>
            <person name="Morisseau C."/>
            <person name="Hammock B.D."/>
        </authorList>
    </citation>
    <scope>FUNCTION</scope>
</reference>
<reference key="6">
    <citation type="journal article" date="2010" name="Cell">
        <title>A tissue-specific atlas of mouse protein phosphorylation and expression.</title>
        <authorList>
            <person name="Huttlin E.L."/>
            <person name="Jedrychowski M.P."/>
            <person name="Elias J.E."/>
            <person name="Goswami T."/>
            <person name="Rad R."/>
            <person name="Beausoleil S.A."/>
            <person name="Villen J."/>
            <person name="Haas W."/>
            <person name="Sowa M.E."/>
            <person name="Gygi S.P."/>
        </authorList>
    </citation>
    <scope>IDENTIFICATION BY MASS SPECTROMETRY [LARGE SCALE ANALYSIS]</scope>
    <source>
        <tissue>Liver</tissue>
    </source>
</reference>
<reference key="7">
    <citation type="journal article" date="2013" name="Mol. Cell">
        <title>SIRT5-mediated lysine desuccinylation impacts diverse metabolic pathways.</title>
        <authorList>
            <person name="Park J."/>
            <person name="Chen Y."/>
            <person name="Tishkoff D.X."/>
            <person name="Peng C."/>
            <person name="Tan M."/>
            <person name="Dai L."/>
            <person name="Xie Z."/>
            <person name="Zhang Y."/>
            <person name="Zwaans B.M."/>
            <person name="Skinner M.E."/>
            <person name="Lombard D.B."/>
            <person name="Zhao Y."/>
        </authorList>
    </citation>
    <scope>SUCCINYLATION [LARGE SCALE ANALYSIS] AT LYS-209 AND LYS-296</scope>
    <scope>IDENTIFICATION BY MASS SPECTROMETRY [LARGE SCALE ANALYSIS]</scope>
    <source>
        <tissue>Liver</tissue>
    </source>
</reference>
<accession>Q8QZR3</accession>
<accession>E9Q3D0</accession>
<accession>Q3TMR2</accession>
<gene>
    <name evidence="9" type="primary">Ces2a</name>
    <name type="synonym">Ces6</name>
</gene>
<sequence length="558" mass="61940">MPLARLPGWLCVVACGLLLLLQHVHGQDSASPIRNTHRGQVRGSFVHVKDTKSGVHAFLGIPFAKPPVGLLRFAPPEDPEPWSGVRDGTSQPAMCLQPDIMNLEDAKEMNLILPPISMSEDCLYLNIYTPTHAQEGSNLPVMVWIHGGGLVVGSASMNDVSKLAATEEIVIVAIQYRLGVLGFFSTGDQHARGNWGYLDQVAALRWVQKNIAYFGGNRDRVTIFGVSAGGTSVSSHILSPMSKGLFHGAIMQSGVALLPDLISDTSEVVYKTVANLSGCEATDSEALIHCLRAKSKQEILAINQVFKMIPAVVDGEFLPKHPQELLTSMDFHPVPSIIGVNTDECGWGVPMFMGLDHIIKNITRETLPAVLKNTAARMMLPPECSHLLVEEYMGDTEDPETLQAQFREMLGDFMFVIPALQVAHFQRSQAPVYFYEFQHLSSFIKHVRPSHVKADHGDDVAFVFGSYLWDMNLDLTEEEELLKRMMMKYWANFARNGNPNSEGLPSWPVLDHDEQYLQLDTQPAVGRALKARRLQFWTKTLPQKIQELKGSQDKHAEL</sequence>
<name>EST2A_MOUSE</name>
<keyword id="KW-0025">Alternative splicing</keyword>
<keyword id="KW-1015">Disulfide bond</keyword>
<keyword id="KW-0256">Endoplasmic reticulum</keyword>
<keyword id="KW-0325">Glycoprotein</keyword>
<keyword id="KW-0378">Hydrolase</keyword>
<keyword id="KW-0492">Microsome</keyword>
<keyword id="KW-1185">Reference proteome</keyword>
<keyword id="KW-0719">Serine esterase</keyword>
<keyword id="KW-0732">Signal</keyword>
<feature type="signal peptide" evidence="4">
    <location>
        <begin position="1"/>
        <end position="26"/>
    </location>
</feature>
<feature type="chain" id="PRO_0000424210" description="Pyrethroid hydrolase Ces2a">
    <location>
        <begin position="27"/>
        <end position="558"/>
    </location>
</feature>
<feature type="active site" description="Acyl-ester intermediate" evidence="5">
    <location>
        <position position="227"/>
    </location>
</feature>
<feature type="active site" description="Charge relay system" evidence="1">
    <location>
        <position position="344"/>
    </location>
</feature>
<feature type="active site" description="Charge relay system" evidence="1">
    <location>
        <position position="456"/>
    </location>
</feature>
<feature type="modified residue" description="N6-succinyllysine" evidence="10">
    <location>
        <position position="209"/>
    </location>
</feature>
<feature type="modified residue" description="N6-succinyllysine" evidence="10">
    <location>
        <position position="296"/>
    </location>
</feature>
<feature type="glycosylation site" description="N-linked (GlcNAc...) asparagine" evidence="4">
    <location>
        <position position="275"/>
    </location>
</feature>
<feature type="glycosylation site" description="N-linked (GlcNAc...) asparagine" evidence="4">
    <location>
        <position position="361"/>
    </location>
</feature>
<feature type="disulfide bond" evidence="3">
    <location>
        <begin position="95"/>
        <end position="122"/>
    </location>
</feature>
<feature type="disulfide bond" evidence="3">
    <location>
        <begin position="279"/>
        <end position="290"/>
    </location>
</feature>
<feature type="splice variant" id="VSP_053352" description="In isoform 2." evidence="7">
    <location>
        <begin position="272"/>
        <end position="304"/>
    </location>
</feature>
<feature type="sequence conflict" description="In Ref. 1; BAE38379." evidence="8" ref="1">
    <original>Q</original>
    <variation>K</variation>
    <location>
        <position position="200"/>
    </location>
</feature>
<feature type="sequence conflict" description="In Ref. 1; BAE38379." evidence="8" ref="1">
    <original>I</original>
    <variation>V</variation>
    <location>
        <position position="223"/>
    </location>
</feature>
<feature type="sequence conflict" description="In Ref. 1; BAE38379." evidence="8" ref="1">
    <original>LKN</original>
    <variation>VKD</variation>
    <location>
        <begin position="371"/>
        <end position="373"/>
    </location>
</feature>
<protein>
    <recommendedName>
        <fullName evidence="8">Pyrethroid hydrolase Ces2a</fullName>
        <ecNumber evidence="6">3.1.1.88</ecNumber>
    </recommendedName>
    <alternativeName>
        <fullName evidence="8">Carboxylic ester hydrolase 2A</fullName>
        <ecNumber>3.1.1.-</ecNumber>
    </alternativeName>
    <alternativeName>
        <fullName>carboxylesterase 2A</fullName>
    </alternativeName>
</protein>
<comment type="function">
    <text evidence="2 6">Carboxylesterases that catalyzes the hydrolysis of pyrethroids pesticides. Hydrolyzes permethrin faster than cypermethrin. Hydrolyzes retinyl esters (By similarity).</text>
</comment>
<comment type="catalytic activity">
    <reaction evidence="6">
        <text>(-)-trans-permethrin + H2O = (3-phenoxyphenyl)methanol + (1S,3R)-3-(2,2-dichlorovinyl)-2,2-dimethylcyclopropanecarboxylate + H(+)</text>
        <dbReference type="Rhea" id="RHEA:30283"/>
        <dbReference type="ChEBI" id="CHEBI:15377"/>
        <dbReference type="ChEBI" id="CHEBI:15378"/>
        <dbReference type="ChEBI" id="CHEBI:62523"/>
        <dbReference type="ChEBI" id="CHEBI:62527"/>
        <dbReference type="ChEBI" id="CHEBI:62531"/>
        <dbReference type="EC" id="3.1.1.88"/>
    </reaction>
</comment>
<comment type="catalytic activity">
    <reaction evidence="2">
        <text>all-trans-retinyl hexadecanoate + H2O = all-trans-retinol + hexadecanoate + H(+)</text>
        <dbReference type="Rhea" id="RHEA:13933"/>
        <dbReference type="ChEBI" id="CHEBI:7896"/>
        <dbReference type="ChEBI" id="CHEBI:15377"/>
        <dbReference type="ChEBI" id="CHEBI:15378"/>
        <dbReference type="ChEBI" id="CHEBI:17336"/>
        <dbReference type="ChEBI" id="CHEBI:17616"/>
    </reaction>
    <physiologicalReaction direction="left-to-right" evidence="2">
        <dbReference type="Rhea" id="RHEA:13934"/>
    </physiologicalReaction>
</comment>
<comment type="subcellular location">
    <subcellularLocation>
        <location evidence="2">Microsome</location>
    </subcellularLocation>
</comment>
<comment type="alternative products">
    <event type="alternative splicing"/>
    <isoform>
        <id>Q8QZR3-1</id>
        <name>1</name>
        <sequence type="displayed"/>
    </isoform>
    <isoform>
        <id>Q8QZR3-2</id>
        <name>2</name>
        <sequence type="described" ref="VSP_053352"/>
    </isoform>
</comment>
<comment type="similarity">
    <text evidence="8">Belongs to the type-B carboxylesterase/lipase family.</text>
</comment>